<protein>
    <recommendedName>
        <fullName evidence="1">DNA replication and repair protein RecF</fullName>
    </recommendedName>
</protein>
<name>RECF_VIBPA</name>
<gene>
    <name evidence="1" type="primary">recF</name>
    <name type="ordered locus">VP0013</name>
</gene>
<keyword id="KW-0067">ATP-binding</keyword>
<keyword id="KW-0963">Cytoplasm</keyword>
<keyword id="KW-0227">DNA damage</keyword>
<keyword id="KW-0234">DNA repair</keyword>
<keyword id="KW-0235">DNA replication</keyword>
<keyword id="KW-0238">DNA-binding</keyword>
<keyword id="KW-0547">Nucleotide-binding</keyword>
<keyword id="KW-0742">SOS response</keyword>
<organism>
    <name type="scientific">Vibrio parahaemolyticus serotype O3:K6 (strain RIMD 2210633)</name>
    <dbReference type="NCBI Taxonomy" id="223926"/>
    <lineage>
        <taxon>Bacteria</taxon>
        <taxon>Pseudomonadati</taxon>
        <taxon>Pseudomonadota</taxon>
        <taxon>Gammaproteobacteria</taxon>
        <taxon>Vibrionales</taxon>
        <taxon>Vibrionaceae</taxon>
        <taxon>Vibrio</taxon>
    </lineage>
</organism>
<accession>Q87TQ5</accession>
<feature type="chain" id="PRO_0000196486" description="DNA replication and repair protein RecF">
    <location>
        <begin position="1"/>
        <end position="359"/>
    </location>
</feature>
<feature type="binding site" evidence="1">
    <location>
        <begin position="30"/>
        <end position="37"/>
    </location>
    <ligand>
        <name>ATP</name>
        <dbReference type="ChEBI" id="CHEBI:30616"/>
    </ligand>
</feature>
<comment type="function">
    <text evidence="1">The RecF protein is involved in DNA metabolism; it is required for DNA replication and normal SOS inducibility. RecF binds preferentially to single-stranded, linear DNA. It also seems to bind ATP.</text>
</comment>
<comment type="subcellular location">
    <subcellularLocation>
        <location evidence="1">Cytoplasm</location>
    </subcellularLocation>
</comment>
<comment type="similarity">
    <text evidence="1">Belongs to the RecF family.</text>
</comment>
<dbReference type="EMBL" id="BA000031">
    <property type="protein sequence ID" value="BAC58276.1"/>
    <property type="molecule type" value="Genomic_DNA"/>
</dbReference>
<dbReference type="RefSeq" id="NP_796392.1">
    <property type="nucleotide sequence ID" value="NC_004603.1"/>
</dbReference>
<dbReference type="RefSeq" id="WP_005458661.1">
    <property type="nucleotide sequence ID" value="NC_004603.1"/>
</dbReference>
<dbReference type="SMR" id="Q87TQ5"/>
<dbReference type="GeneID" id="1187469"/>
<dbReference type="KEGG" id="vpa:VP0013"/>
<dbReference type="PATRIC" id="fig|223926.6.peg.13"/>
<dbReference type="eggNOG" id="COG1195">
    <property type="taxonomic scope" value="Bacteria"/>
</dbReference>
<dbReference type="HOGENOM" id="CLU_040267_0_0_6"/>
<dbReference type="Proteomes" id="UP000002493">
    <property type="component" value="Chromosome 1"/>
</dbReference>
<dbReference type="GO" id="GO:0005737">
    <property type="term" value="C:cytoplasm"/>
    <property type="evidence" value="ECO:0007669"/>
    <property type="project" value="UniProtKB-SubCell"/>
</dbReference>
<dbReference type="GO" id="GO:0005524">
    <property type="term" value="F:ATP binding"/>
    <property type="evidence" value="ECO:0007669"/>
    <property type="project" value="UniProtKB-UniRule"/>
</dbReference>
<dbReference type="GO" id="GO:0003697">
    <property type="term" value="F:single-stranded DNA binding"/>
    <property type="evidence" value="ECO:0007669"/>
    <property type="project" value="UniProtKB-UniRule"/>
</dbReference>
<dbReference type="GO" id="GO:0006260">
    <property type="term" value="P:DNA replication"/>
    <property type="evidence" value="ECO:0007669"/>
    <property type="project" value="UniProtKB-UniRule"/>
</dbReference>
<dbReference type="GO" id="GO:0000731">
    <property type="term" value="P:DNA synthesis involved in DNA repair"/>
    <property type="evidence" value="ECO:0007669"/>
    <property type="project" value="TreeGrafter"/>
</dbReference>
<dbReference type="GO" id="GO:0006302">
    <property type="term" value="P:double-strand break repair"/>
    <property type="evidence" value="ECO:0007669"/>
    <property type="project" value="TreeGrafter"/>
</dbReference>
<dbReference type="GO" id="GO:0009432">
    <property type="term" value="P:SOS response"/>
    <property type="evidence" value="ECO:0007669"/>
    <property type="project" value="UniProtKB-UniRule"/>
</dbReference>
<dbReference type="FunFam" id="1.20.1050.90:FF:000001">
    <property type="entry name" value="DNA replication and repair protein RecF"/>
    <property type="match status" value="1"/>
</dbReference>
<dbReference type="Gene3D" id="3.40.50.300">
    <property type="entry name" value="P-loop containing nucleotide triphosphate hydrolases"/>
    <property type="match status" value="1"/>
</dbReference>
<dbReference type="Gene3D" id="1.20.1050.90">
    <property type="entry name" value="RecF/RecN/SMC, N-terminal domain"/>
    <property type="match status" value="1"/>
</dbReference>
<dbReference type="HAMAP" id="MF_00365">
    <property type="entry name" value="RecF"/>
    <property type="match status" value="1"/>
</dbReference>
<dbReference type="InterPro" id="IPR001238">
    <property type="entry name" value="DNA-binding_RecF"/>
</dbReference>
<dbReference type="InterPro" id="IPR018078">
    <property type="entry name" value="DNA-binding_RecF_CS"/>
</dbReference>
<dbReference type="InterPro" id="IPR027417">
    <property type="entry name" value="P-loop_NTPase"/>
</dbReference>
<dbReference type="InterPro" id="IPR003395">
    <property type="entry name" value="RecF/RecN/SMC_N"/>
</dbReference>
<dbReference type="InterPro" id="IPR042174">
    <property type="entry name" value="RecF_2"/>
</dbReference>
<dbReference type="NCBIfam" id="TIGR00611">
    <property type="entry name" value="recf"/>
    <property type="match status" value="1"/>
</dbReference>
<dbReference type="PANTHER" id="PTHR32182">
    <property type="entry name" value="DNA REPLICATION AND REPAIR PROTEIN RECF"/>
    <property type="match status" value="1"/>
</dbReference>
<dbReference type="PANTHER" id="PTHR32182:SF0">
    <property type="entry name" value="DNA REPLICATION AND REPAIR PROTEIN RECF"/>
    <property type="match status" value="1"/>
</dbReference>
<dbReference type="Pfam" id="PF02463">
    <property type="entry name" value="SMC_N"/>
    <property type="match status" value="1"/>
</dbReference>
<dbReference type="SUPFAM" id="SSF52540">
    <property type="entry name" value="P-loop containing nucleoside triphosphate hydrolases"/>
    <property type="match status" value="1"/>
</dbReference>
<dbReference type="PROSITE" id="PS00617">
    <property type="entry name" value="RECF_1"/>
    <property type="match status" value="1"/>
</dbReference>
<dbReference type="PROSITE" id="PS00618">
    <property type="entry name" value="RECF_2"/>
    <property type="match status" value="1"/>
</dbReference>
<evidence type="ECO:0000255" key="1">
    <source>
        <dbReference type="HAMAP-Rule" id="MF_00365"/>
    </source>
</evidence>
<reference key="1">
    <citation type="journal article" date="2003" name="Lancet">
        <title>Genome sequence of Vibrio parahaemolyticus: a pathogenic mechanism distinct from that of V. cholerae.</title>
        <authorList>
            <person name="Makino K."/>
            <person name="Oshima K."/>
            <person name="Kurokawa K."/>
            <person name="Yokoyama K."/>
            <person name="Uda T."/>
            <person name="Tagomori K."/>
            <person name="Iijima Y."/>
            <person name="Najima M."/>
            <person name="Nakano M."/>
            <person name="Yamashita A."/>
            <person name="Kubota Y."/>
            <person name="Kimura S."/>
            <person name="Yasunaga T."/>
            <person name="Honda T."/>
            <person name="Shinagawa H."/>
            <person name="Hattori M."/>
            <person name="Iida T."/>
        </authorList>
    </citation>
    <scope>NUCLEOTIDE SEQUENCE [LARGE SCALE GENOMIC DNA]</scope>
    <source>
        <strain>RIMD 2210633</strain>
    </source>
</reference>
<proteinExistence type="inferred from homology"/>
<sequence>MPLSRLIIQQFRNIKACDIQLSAGFNFLIGPNGSGKTSVLEAIYLLGHGRSFKSSLTGRVIQNECDELFVHGRFLNSDQFELPIGINKQRDGSTEVKIGGQSGQKLAQLAQVLPLQLIHPEGFDLLTDGPKHRRAFIDWGVFHTEPAFYDAWGRFKRLNKQRNALLKTASSYRELSYWDQEMARLAENISQWRSLYIEQMKTVAETICQTFLPEFEIQLKYYRGWDKDTPYQEILEKNFERDQSLGYTFSGPNKADLRIKVNGTPVEDVLSRGQLKLMVCALRVAQGQHLTAMTGKQCIYLIDDFASELDSQRRKRLADCLKETGAQVFVSSITENQIADMLDDNGKLFHVEHGRIESN</sequence>